<accession>A7HMM7</accession>
<organism>
    <name type="scientific">Fervidobacterium nodosum (strain ATCC 35602 / DSM 5306 / Rt17-B1)</name>
    <dbReference type="NCBI Taxonomy" id="381764"/>
    <lineage>
        <taxon>Bacteria</taxon>
        <taxon>Thermotogati</taxon>
        <taxon>Thermotogota</taxon>
        <taxon>Thermotogae</taxon>
        <taxon>Thermotogales</taxon>
        <taxon>Fervidobacteriaceae</taxon>
        <taxon>Fervidobacterium</taxon>
    </lineage>
</organism>
<dbReference type="EC" id="7.4.2.8" evidence="1"/>
<dbReference type="EMBL" id="CP000771">
    <property type="protein sequence ID" value="ABS61160.1"/>
    <property type="molecule type" value="Genomic_DNA"/>
</dbReference>
<dbReference type="RefSeq" id="WP_011994469.1">
    <property type="nucleotide sequence ID" value="NC_009718.1"/>
</dbReference>
<dbReference type="SMR" id="A7HMM7"/>
<dbReference type="STRING" id="381764.Fnod_1313"/>
<dbReference type="KEGG" id="fno:Fnod_1313"/>
<dbReference type="eggNOG" id="COG0653">
    <property type="taxonomic scope" value="Bacteria"/>
</dbReference>
<dbReference type="HOGENOM" id="CLU_005314_3_0_0"/>
<dbReference type="OrthoDB" id="9805579at2"/>
<dbReference type="Proteomes" id="UP000002415">
    <property type="component" value="Chromosome"/>
</dbReference>
<dbReference type="GO" id="GO:0031522">
    <property type="term" value="C:cell envelope Sec protein transport complex"/>
    <property type="evidence" value="ECO:0007669"/>
    <property type="project" value="TreeGrafter"/>
</dbReference>
<dbReference type="GO" id="GO:0005829">
    <property type="term" value="C:cytosol"/>
    <property type="evidence" value="ECO:0007669"/>
    <property type="project" value="TreeGrafter"/>
</dbReference>
<dbReference type="GO" id="GO:0005886">
    <property type="term" value="C:plasma membrane"/>
    <property type="evidence" value="ECO:0007669"/>
    <property type="project" value="UniProtKB-SubCell"/>
</dbReference>
<dbReference type="GO" id="GO:0005524">
    <property type="term" value="F:ATP binding"/>
    <property type="evidence" value="ECO:0007669"/>
    <property type="project" value="UniProtKB-UniRule"/>
</dbReference>
<dbReference type="GO" id="GO:0008564">
    <property type="term" value="F:protein-exporting ATPase activity"/>
    <property type="evidence" value="ECO:0007669"/>
    <property type="project" value="UniProtKB-EC"/>
</dbReference>
<dbReference type="GO" id="GO:0065002">
    <property type="term" value="P:intracellular protein transmembrane transport"/>
    <property type="evidence" value="ECO:0007669"/>
    <property type="project" value="UniProtKB-UniRule"/>
</dbReference>
<dbReference type="GO" id="GO:0017038">
    <property type="term" value="P:protein import"/>
    <property type="evidence" value="ECO:0007669"/>
    <property type="project" value="InterPro"/>
</dbReference>
<dbReference type="GO" id="GO:0006605">
    <property type="term" value="P:protein targeting"/>
    <property type="evidence" value="ECO:0007669"/>
    <property type="project" value="UniProtKB-UniRule"/>
</dbReference>
<dbReference type="GO" id="GO:0043952">
    <property type="term" value="P:protein transport by the Sec complex"/>
    <property type="evidence" value="ECO:0007669"/>
    <property type="project" value="TreeGrafter"/>
</dbReference>
<dbReference type="CDD" id="cd17928">
    <property type="entry name" value="DEXDc_SecA"/>
    <property type="match status" value="1"/>
</dbReference>
<dbReference type="CDD" id="cd18803">
    <property type="entry name" value="SF2_C_secA"/>
    <property type="match status" value="1"/>
</dbReference>
<dbReference type="FunFam" id="3.40.50.300:FF:000429">
    <property type="entry name" value="Preprotein translocase subunit SecA"/>
    <property type="match status" value="1"/>
</dbReference>
<dbReference type="Gene3D" id="1.10.3060.10">
    <property type="entry name" value="Helical scaffold and wing domains of SecA"/>
    <property type="match status" value="1"/>
</dbReference>
<dbReference type="Gene3D" id="3.40.50.300">
    <property type="entry name" value="P-loop containing nucleotide triphosphate hydrolases"/>
    <property type="match status" value="4"/>
</dbReference>
<dbReference type="HAMAP" id="MF_01382">
    <property type="entry name" value="SecA"/>
    <property type="match status" value="1"/>
</dbReference>
<dbReference type="InterPro" id="IPR014001">
    <property type="entry name" value="Helicase_ATP-bd"/>
</dbReference>
<dbReference type="InterPro" id="IPR001650">
    <property type="entry name" value="Helicase_C-like"/>
</dbReference>
<dbReference type="InterPro" id="IPR027417">
    <property type="entry name" value="P-loop_NTPase"/>
</dbReference>
<dbReference type="InterPro" id="IPR000185">
    <property type="entry name" value="SecA"/>
</dbReference>
<dbReference type="InterPro" id="IPR020937">
    <property type="entry name" value="SecA_CS"/>
</dbReference>
<dbReference type="InterPro" id="IPR011115">
    <property type="entry name" value="SecA_DEAD"/>
</dbReference>
<dbReference type="InterPro" id="IPR014018">
    <property type="entry name" value="SecA_motor_DEAD"/>
</dbReference>
<dbReference type="InterPro" id="IPR011130">
    <property type="entry name" value="SecA_preprotein_X-link_dom"/>
</dbReference>
<dbReference type="InterPro" id="IPR044722">
    <property type="entry name" value="SecA_SF2_C"/>
</dbReference>
<dbReference type="InterPro" id="IPR011116">
    <property type="entry name" value="SecA_Wing/Scaffold"/>
</dbReference>
<dbReference type="InterPro" id="IPR036266">
    <property type="entry name" value="SecA_Wing/Scaffold_sf"/>
</dbReference>
<dbReference type="InterPro" id="IPR036670">
    <property type="entry name" value="SecA_X-link_sf"/>
</dbReference>
<dbReference type="PANTHER" id="PTHR30612:SF0">
    <property type="entry name" value="CHLOROPLAST PROTEIN-TRANSPORTING ATPASE"/>
    <property type="match status" value="1"/>
</dbReference>
<dbReference type="PANTHER" id="PTHR30612">
    <property type="entry name" value="SECA INNER MEMBRANE COMPONENT OF SEC PROTEIN SECRETION SYSTEM"/>
    <property type="match status" value="1"/>
</dbReference>
<dbReference type="Pfam" id="PF21090">
    <property type="entry name" value="P-loop_SecA"/>
    <property type="match status" value="2"/>
</dbReference>
<dbReference type="Pfam" id="PF07517">
    <property type="entry name" value="SecA_DEAD"/>
    <property type="match status" value="1"/>
</dbReference>
<dbReference type="Pfam" id="PF01043">
    <property type="entry name" value="SecA_PP_bind"/>
    <property type="match status" value="1"/>
</dbReference>
<dbReference type="Pfam" id="PF07516">
    <property type="entry name" value="SecA_SW"/>
    <property type="match status" value="1"/>
</dbReference>
<dbReference type="PRINTS" id="PR00906">
    <property type="entry name" value="SECA"/>
</dbReference>
<dbReference type="SMART" id="SM00957">
    <property type="entry name" value="SecA_DEAD"/>
    <property type="match status" value="1"/>
</dbReference>
<dbReference type="SMART" id="SM00958">
    <property type="entry name" value="SecA_PP_bind"/>
    <property type="match status" value="1"/>
</dbReference>
<dbReference type="SUPFAM" id="SSF81886">
    <property type="entry name" value="Helical scaffold and wing domains of SecA"/>
    <property type="match status" value="1"/>
</dbReference>
<dbReference type="SUPFAM" id="SSF52540">
    <property type="entry name" value="P-loop containing nucleoside triphosphate hydrolases"/>
    <property type="match status" value="2"/>
</dbReference>
<dbReference type="SUPFAM" id="SSF81767">
    <property type="entry name" value="Pre-protein crosslinking domain of SecA"/>
    <property type="match status" value="1"/>
</dbReference>
<dbReference type="PROSITE" id="PS01312">
    <property type="entry name" value="SECA"/>
    <property type="match status" value="1"/>
</dbReference>
<dbReference type="PROSITE" id="PS51196">
    <property type="entry name" value="SECA_MOTOR_DEAD"/>
    <property type="match status" value="1"/>
</dbReference>
<proteinExistence type="inferred from homology"/>
<name>SECA_FERNB</name>
<protein>
    <recommendedName>
        <fullName evidence="1">Protein translocase subunit SecA</fullName>
        <ecNumber evidence="1">7.4.2.8</ecNumber>
    </recommendedName>
</protein>
<feature type="chain" id="PRO_0000320811" description="Protein translocase subunit SecA">
    <location>
        <begin position="1"/>
        <end position="864"/>
    </location>
</feature>
<feature type="binding site" evidence="1">
    <location>
        <position position="85"/>
    </location>
    <ligand>
        <name>ATP</name>
        <dbReference type="ChEBI" id="CHEBI:30616"/>
    </ligand>
</feature>
<feature type="binding site" evidence="1">
    <location>
        <begin position="103"/>
        <end position="107"/>
    </location>
    <ligand>
        <name>ATP</name>
        <dbReference type="ChEBI" id="CHEBI:30616"/>
    </ligand>
</feature>
<feature type="binding site" evidence="1">
    <location>
        <position position="542"/>
    </location>
    <ligand>
        <name>ATP</name>
        <dbReference type="ChEBI" id="CHEBI:30616"/>
    </ligand>
</feature>
<keyword id="KW-0067">ATP-binding</keyword>
<keyword id="KW-0997">Cell inner membrane</keyword>
<keyword id="KW-1003">Cell membrane</keyword>
<keyword id="KW-0963">Cytoplasm</keyword>
<keyword id="KW-0472">Membrane</keyword>
<keyword id="KW-0547">Nucleotide-binding</keyword>
<keyword id="KW-0653">Protein transport</keyword>
<keyword id="KW-1185">Reference proteome</keyword>
<keyword id="KW-1278">Translocase</keyword>
<keyword id="KW-0811">Translocation</keyword>
<keyword id="KW-0813">Transport</keyword>
<sequence length="864" mass="99866">MLGNLKKIFDKNEIEIRKARKIVERINQLDEKARKTSFEEMKSYILQYKGKLENIEELDEHLEQVFAYVRETARRTVGMRHFDVQLIGGIVLHKGKIAEMKTGEGKTLVATAPIVLNSLMNRNIHVVTVNDYLAKRDAMWMGPIYLALGLRVGIINTTGKAYEVVWKNPELAEKGLKENYCVWPDDYDGEFLSDEMKVKKAVEAFEVDIIEVSKKEAYRCDVTYGTNSEFGFDYLRDNLVVSLDDKVQMGHFYAIVDEVDSILIDEARTPLIISGPSKNNASVYKHFYQIAKRLEKDKHFKVDEEHRTVLLTDEGIEYLEKLLGVDNLYDPANVNSIYHITNSLKAIHLFKKDVDYIVHNGQVLIVDEFTGRVLPGRRYSGGLHQAIEAKEGVPIKEESITYATITYQNYFRMYEKLAGMTGTAKTEEQEFKAIYGMDVVVIPTHKPMIRIDHDDLIYRSVEEKYKAIVEEIKKRHEKGQPVLVGTTSIEKSEKLSEMLKKEGIPHQVLNAKYHEKEAQIVAQAGQKGMVTIATNMAGRGTDIKLGPGVKELGGLLIIGTERHESRRIDNQLRGRSGRQGDPGESIFFLSVEDDLMRIFGGDRIQKVMDMVKIEPGQPIYHPLLTKLIEQVQKKVEGINFSVRKYLLELDSVLDTQRRAIYGYRDNILERDVDDFISEAIDNFVEARIEEFCSGVEWDWEGLKNSFAVIKDFVKIDTKIDDKEKLKQDIIEQITKAYRLKKEEFGEDFEHVAKFIVLRIIDENWRQYLEEVEHVKESIRLRSYGQKDPVLEFKKETYDMFNDMMMRTYELSVSYLLNLRRVDNKAEEESKKELAKVSTVHDEFRLIAEESKDSDKKKPKLKIKR</sequence>
<comment type="function">
    <text evidence="1">Part of the Sec protein translocase complex. Interacts with the SecYEG preprotein conducting channel. Has a central role in coupling the hydrolysis of ATP to the transfer of proteins into and across the cell membrane, serving as an ATP-driven molecular motor driving the stepwise translocation of polypeptide chains across the membrane.</text>
</comment>
<comment type="catalytic activity">
    <reaction evidence="1">
        <text>ATP + H2O + cellular proteinSide 1 = ADP + phosphate + cellular proteinSide 2.</text>
        <dbReference type="EC" id="7.4.2.8"/>
    </reaction>
</comment>
<comment type="subunit">
    <text evidence="1">Monomer and homodimer. Part of the essential Sec protein translocation apparatus which comprises SecA, SecYEG and auxiliary proteins SecDF. Other proteins may also be involved.</text>
</comment>
<comment type="subcellular location">
    <subcellularLocation>
        <location evidence="1">Cell inner membrane</location>
        <topology evidence="1">Peripheral membrane protein</topology>
        <orientation evidence="1">Cytoplasmic side</orientation>
    </subcellularLocation>
    <subcellularLocation>
        <location evidence="1">Cytoplasm</location>
    </subcellularLocation>
    <text evidence="1">Distribution is 50-50.</text>
</comment>
<comment type="similarity">
    <text evidence="1">Belongs to the SecA family.</text>
</comment>
<evidence type="ECO:0000255" key="1">
    <source>
        <dbReference type="HAMAP-Rule" id="MF_01382"/>
    </source>
</evidence>
<reference key="1">
    <citation type="submission" date="2007-07" db="EMBL/GenBank/DDBJ databases">
        <title>Complete sequence of Fervidobacterium nodosum Rt17-B1.</title>
        <authorList>
            <consortium name="US DOE Joint Genome Institute"/>
            <person name="Copeland A."/>
            <person name="Lucas S."/>
            <person name="Lapidus A."/>
            <person name="Barry K."/>
            <person name="Glavina del Rio T."/>
            <person name="Dalin E."/>
            <person name="Tice H."/>
            <person name="Pitluck S."/>
            <person name="Saunders E."/>
            <person name="Brettin T."/>
            <person name="Bruce D."/>
            <person name="Detter J.C."/>
            <person name="Han C."/>
            <person name="Schmutz J."/>
            <person name="Larimer F."/>
            <person name="Land M."/>
            <person name="Hauser L."/>
            <person name="Kyrpides N."/>
            <person name="Mikhailova N."/>
            <person name="Nelson K."/>
            <person name="Gogarten J.P."/>
            <person name="Noll K."/>
            <person name="Richardson P."/>
        </authorList>
    </citation>
    <scope>NUCLEOTIDE SEQUENCE [LARGE SCALE GENOMIC DNA]</scope>
    <source>
        <strain>ATCC 35602 / DSM 5306 / Rt17-B1</strain>
    </source>
</reference>
<gene>
    <name evidence="1" type="primary">secA</name>
    <name type="ordered locus">Fnod_1313</name>
</gene>